<comment type="function">
    <text evidence="1">Insecticidal toxin that reversibly and voltage-independently blocks both mid-low- (M-LVA) and high-voltage-activated (HVA) calcium channels (Cav) in cockroach DUM neurons. Also causes a modest block of insect sodium channel currents (Nav). Induces potent excitatory symptoms, followed by flaccid paralysis leading to death in house crickets (By similarity).</text>
</comment>
<comment type="subcellular location">
    <subcellularLocation>
        <location evidence="1">Secreted</location>
    </subcellularLocation>
</comment>
<comment type="tissue specificity">
    <text>Expressed by the venom gland.</text>
</comment>
<comment type="domain">
    <text evidence="1">The presence of a 'disulfide through disulfide knot' structurally defines this protein as a knottin.</text>
</comment>
<comment type="miscellaneous">
    <text>This toxin comes from a male specimen. It is observed that propeptide sequences coming from male specimen are identical but have only limited homology with the female paralogs, but the reason is unknown.</text>
</comment>
<comment type="similarity">
    <text evidence="4">Belongs to the neurotoxin 08 (Shiva) family. 01 (omega toxin) subfamily.</text>
</comment>
<protein>
    <recommendedName>
        <fullName>Omega-hexatoxin-Ar1f</fullName>
        <shortName>Omega-HXTX-Ar1f</shortName>
    </recommendedName>
    <alternativeName>
        <fullName>Omega-atracotoxin-Ar1f</fullName>
        <shortName>Omega-ACTX-Ar1f</shortName>
    </alternativeName>
</protein>
<evidence type="ECO:0000250" key="1"/>
<evidence type="ECO:0000250" key="2">
    <source>
        <dbReference type="UniProtKB" id="P56207"/>
    </source>
</evidence>
<evidence type="ECO:0000255" key="3"/>
<evidence type="ECO:0000305" key="4"/>
<reference key="1">
    <citation type="journal article" date="2007" name="Biochem. Pharmacol.">
        <title>The omega-atracotoxins: selective blockers of insect M-LVA and HVA calcium channels.</title>
        <authorList>
            <person name="Chong Y."/>
            <person name="Hayes J.L."/>
            <person name="Sollod B."/>
            <person name="Wen S."/>
            <person name="Wilson D.T."/>
            <person name="Hains P.G."/>
            <person name="Hodgson W.C."/>
            <person name="Broady K.W."/>
            <person name="King G.F."/>
            <person name="Nicholson G.M."/>
        </authorList>
    </citation>
    <scope>NUCLEOTIDE SEQUENCE [MRNA]</scope>
    <source>
        <strain>XenFW135</strain>
        <tissue>Venom gland</tissue>
    </source>
</reference>
<proteinExistence type="evidence at transcript level"/>
<name>TO1F_ATRRO</name>
<sequence>MNTATGVIALLVLATVIGCIEAEDTRADLQGGEAAEKVFRRSPTCIPSGQPCPYNENCCSQSCTFKENETGNTVKRCD</sequence>
<keyword id="KW-0108">Calcium channel impairing toxin</keyword>
<keyword id="KW-0165">Cleavage on pair of basic residues</keyword>
<keyword id="KW-1015">Disulfide bond</keyword>
<keyword id="KW-0872">Ion channel impairing toxin</keyword>
<keyword id="KW-0960">Knottin</keyword>
<keyword id="KW-0528">Neurotoxin</keyword>
<keyword id="KW-0964">Secreted</keyword>
<keyword id="KW-0732">Signal</keyword>
<keyword id="KW-0800">Toxin</keyword>
<keyword id="KW-1218">Voltage-gated calcium channel impairing toxin</keyword>
<keyword id="KW-0738">Voltage-gated sodium channel impairing toxin</keyword>
<dbReference type="EMBL" id="EF523499">
    <property type="protein sequence ID" value="ABP63658.1"/>
    <property type="molecule type" value="mRNA"/>
</dbReference>
<dbReference type="BMRB" id="A5A3H5"/>
<dbReference type="SMR" id="A5A3H5"/>
<dbReference type="ArachnoServer" id="AS000025">
    <property type="toxin name" value="omega-hexatoxin-Ar1f"/>
</dbReference>
<dbReference type="GO" id="GO:0005576">
    <property type="term" value="C:extracellular region"/>
    <property type="evidence" value="ECO:0007669"/>
    <property type="project" value="UniProtKB-SubCell"/>
</dbReference>
<dbReference type="GO" id="GO:0019855">
    <property type="term" value="F:calcium channel inhibitor activity"/>
    <property type="evidence" value="ECO:0007669"/>
    <property type="project" value="InterPro"/>
</dbReference>
<dbReference type="GO" id="GO:0017080">
    <property type="term" value="F:sodium channel regulator activity"/>
    <property type="evidence" value="ECO:0007669"/>
    <property type="project" value="UniProtKB-KW"/>
</dbReference>
<dbReference type="GO" id="GO:0090729">
    <property type="term" value="F:toxin activity"/>
    <property type="evidence" value="ECO:0007669"/>
    <property type="project" value="UniProtKB-KW"/>
</dbReference>
<dbReference type="GO" id="GO:0006952">
    <property type="term" value="P:defense response"/>
    <property type="evidence" value="ECO:0007669"/>
    <property type="project" value="InterPro"/>
</dbReference>
<dbReference type="InterPro" id="IPR009415">
    <property type="entry name" value="Omega-atracotox"/>
</dbReference>
<dbReference type="InterPro" id="IPR018071">
    <property type="entry name" value="Omega-atracotox_CS"/>
</dbReference>
<dbReference type="Pfam" id="PF06357">
    <property type="entry name" value="Omega-toxin"/>
    <property type="match status" value="1"/>
</dbReference>
<dbReference type="SUPFAM" id="SSF57059">
    <property type="entry name" value="omega toxin-like"/>
    <property type="match status" value="1"/>
</dbReference>
<dbReference type="PROSITE" id="PS60016">
    <property type="entry name" value="OMEGA_ACTX_1"/>
    <property type="match status" value="1"/>
</dbReference>
<accession>A5A3H5</accession>
<feature type="signal peptide" evidence="3">
    <location>
        <begin position="1"/>
        <end position="22"/>
    </location>
</feature>
<feature type="propeptide" id="PRO_0000379916" evidence="1">
    <location>
        <begin position="23"/>
        <end position="41"/>
    </location>
</feature>
<feature type="peptide" id="PRO_0000379917" description="Omega-hexatoxin-Ar1f">
    <location>
        <begin position="42"/>
        <end position="78"/>
    </location>
</feature>
<feature type="site" description="Critical for insecticidal activity" evidence="2">
    <location>
        <position position="51"/>
    </location>
</feature>
<feature type="site" description="Critical for insecticidal activity" evidence="2">
    <location>
        <position position="68"/>
    </location>
</feature>
<feature type="site" description="Critical for insecticidal activity" evidence="2">
    <location>
        <position position="76"/>
    </location>
</feature>
<feature type="disulfide bond" evidence="2">
    <location>
        <begin position="45"/>
        <end position="59"/>
    </location>
</feature>
<feature type="disulfide bond" evidence="2">
    <location>
        <begin position="52"/>
        <end position="63"/>
    </location>
</feature>
<feature type="disulfide bond" evidence="2">
    <location>
        <begin position="58"/>
        <end position="77"/>
    </location>
</feature>
<organism>
    <name type="scientific">Atrax robustus</name>
    <name type="common">Sydney funnel-web spider</name>
    <dbReference type="NCBI Taxonomy" id="6903"/>
    <lineage>
        <taxon>Eukaryota</taxon>
        <taxon>Metazoa</taxon>
        <taxon>Ecdysozoa</taxon>
        <taxon>Arthropoda</taxon>
        <taxon>Chelicerata</taxon>
        <taxon>Arachnida</taxon>
        <taxon>Araneae</taxon>
        <taxon>Mygalomorphae</taxon>
        <taxon>Hexathelidae</taxon>
        <taxon>Atrax</taxon>
    </lineage>
</organism>